<accession>A7X3R6</accession>
<dbReference type="EMBL" id="EU029676">
    <property type="protein sequence ID" value="ABU68476.1"/>
    <property type="molecule type" value="mRNA"/>
</dbReference>
<dbReference type="SMR" id="A7X3R6"/>
<dbReference type="GO" id="GO:0005576">
    <property type="term" value="C:extracellular region"/>
    <property type="evidence" value="ECO:0007669"/>
    <property type="project" value="UniProtKB-SubCell"/>
</dbReference>
<dbReference type="GO" id="GO:0090729">
    <property type="term" value="F:toxin activity"/>
    <property type="evidence" value="ECO:0007669"/>
    <property type="project" value="UniProtKB-KW"/>
</dbReference>
<dbReference type="CDD" id="cd00206">
    <property type="entry name" value="TFP_snake_toxin"/>
    <property type="match status" value="1"/>
</dbReference>
<dbReference type="Gene3D" id="2.10.60.10">
    <property type="entry name" value="CD59"/>
    <property type="match status" value="1"/>
</dbReference>
<dbReference type="InterPro" id="IPR003571">
    <property type="entry name" value="Snake_3FTx"/>
</dbReference>
<dbReference type="InterPro" id="IPR045860">
    <property type="entry name" value="Snake_toxin-like_sf"/>
</dbReference>
<dbReference type="InterPro" id="IPR018354">
    <property type="entry name" value="Snake_toxin_con_site"/>
</dbReference>
<dbReference type="InterPro" id="IPR054131">
    <property type="entry name" value="Toxin_cobra-type"/>
</dbReference>
<dbReference type="Pfam" id="PF21947">
    <property type="entry name" value="Toxin_cobra-type"/>
    <property type="match status" value="1"/>
</dbReference>
<dbReference type="SUPFAM" id="SSF57302">
    <property type="entry name" value="Snake toxin-like"/>
    <property type="match status" value="1"/>
</dbReference>
<dbReference type="PROSITE" id="PS00272">
    <property type="entry name" value="SNAKE_TOXIN"/>
    <property type="match status" value="1"/>
</dbReference>
<comment type="subcellular location">
    <subcellularLocation>
        <location evidence="1">Secreted</location>
    </subcellularLocation>
</comment>
<comment type="tissue specificity">
    <text evidence="4">Expressed by the venom gland.</text>
</comment>
<comment type="similarity">
    <text evidence="4">Belongs to the three-finger toxin family. Ancestral subfamily.</text>
</comment>
<reference key="1">
    <citation type="journal article" date="2008" name="Mol. Cell. Proteomics">
        <title>Evolution of an arsenal: structural and functional diversification of the venom system in the advanced snakes (Caenophidia).</title>
        <authorList>
            <person name="Fry B.G."/>
            <person name="Scheib H."/>
            <person name="van der Weerd L."/>
            <person name="Young B."/>
            <person name="McNaughtan J."/>
            <person name="Ramjan S.F.R."/>
            <person name="Vidal N."/>
            <person name="Poelmann R.E."/>
            <person name="Norman J.A."/>
        </authorList>
    </citation>
    <scope>NUCLEOTIDE SEQUENCE [LARGE SCALE MRNA]</scope>
    <source>
        <tissue>Venom gland</tissue>
    </source>
</reference>
<feature type="signal peptide" evidence="3">
    <location>
        <begin position="1"/>
        <end position="21"/>
    </location>
</feature>
<feature type="chain" id="PRO_0000316179" description="Toxin 3FTx-Lei1">
    <location>
        <begin position="22"/>
        <end position="85"/>
    </location>
</feature>
<feature type="disulfide bond" evidence="2">
    <location>
        <begin position="24"/>
        <end position="45"/>
    </location>
</feature>
<feature type="disulfide bond" evidence="2">
    <location>
        <begin position="27"/>
        <end position="32"/>
    </location>
</feature>
<feature type="disulfide bond" evidence="2">
    <location>
        <begin position="38"/>
        <end position="63"/>
    </location>
</feature>
<feature type="disulfide bond" evidence="2">
    <location>
        <begin position="67"/>
        <end position="78"/>
    </location>
</feature>
<feature type="disulfide bond" evidence="2">
    <location>
        <begin position="79"/>
        <end position="84"/>
    </location>
</feature>
<sequence>MKTLLLSLVVVTFVCLDLAHTRTCYSCTENICLQHEQCQDGQDVCYKRWNTTYLILTDVVRGCAKTCPTPIEEEEVYCCLKDNCN</sequence>
<keyword id="KW-1015">Disulfide bond</keyword>
<keyword id="KW-0964">Secreted</keyword>
<keyword id="KW-0732">Signal</keyword>
<keyword id="KW-0800">Toxin</keyword>
<proteinExistence type="inferred from homology"/>
<protein>
    <recommendedName>
        <fullName evidence="5">Toxin 3FTx-Lei1</fullName>
    </recommendedName>
</protein>
<organism>
    <name type="scientific">Leioheterodon madagascariensis</name>
    <name type="common">Malagasy giant hognose snake</name>
    <name type="synonym">Heterodon madagascariensis</name>
    <dbReference type="NCBI Taxonomy" id="46577"/>
    <lineage>
        <taxon>Eukaryota</taxon>
        <taxon>Metazoa</taxon>
        <taxon>Chordata</taxon>
        <taxon>Craniata</taxon>
        <taxon>Vertebrata</taxon>
        <taxon>Euteleostomi</taxon>
        <taxon>Lepidosauria</taxon>
        <taxon>Squamata</taxon>
        <taxon>Bifurcata</taxon>
        <taxon>Unidentata</taxon>
        <taxon>Episquamata</taxon>
        <taxon>Toxicofera</taxon>
        <taxon>Serpentes</taxon>
        <taxon>Colubroidea</taxon>
        <taxon>Lamprophiidae</taxon>
        <taxon>Pseudoxyrhophiinae</taxon>
        <taxon>Leioheterodon</taxon>
    </lineage>
</organism>
<evidence type="ECO:0000250" key="1"/>
<evidence type="ECO:0000250" key="2">
    <source>
        <dbReference type="UniProtKB" id="P81782"/>
    </source>
</evidence>
<evidence type="ECO:0000255" key="3"/>
<evidence type="ECO:0000305" key="4"/>
<evidence type="ECO:0000312" key="5">
    <source>
        <dbReference type="EMBL" id="ABU68476.1"/>
    </source>
</evidence>
<name>3NX1_LEIMD</name>